<evidence type="ECO:0000255" key="1">
    <source>
        <dbReference type="HAMAP-Rule" id="MF_00183"/>
    </source>
</evidence>
<keyword id="KW-0414">Isoprene biosynthesis</keyword>
<keyword id="KW-0464">Manganese</keyword>
<keyword id="KW-0479">Metal-binding</keyword>
<keyword id="KW-0521">NADP</keyword>
<keyword id="KW-0560">Oxidoreductase</keyword>
<feature type="chain" id="PRO_0000163649" description="1-deoxy-D-xylulose 5-phosphate reductoisomerase">
    <location>
        <begin position="1"/>
        <end position="387"/>
    </location>
</feature>
<feature type="binding site" evidence="1">
    <location>
        <position position="10"/>
    </location>
    <ligand>
        <name>NADPH</name>
        <dbReference type="ChEBI" id="CHEBI:57783"/>
    </ligand>
</feature>
<feature type="binding site" evidence="1">
    <location>
        <position position="11"/>
    </location>
    <ligand>
        <name>NADPH</name>
        <dbReference type="ChEBI" id="CHEBI:57783"/>
    </ligand>
</feature>
<feature type="binding site" evidence="1">
    <location>
        <position position="13"/>
    </location>
    <ligand>
        <name>NADPH</name>
        <dbReference type="ChEBI" id="CHEBI:57783"/>
    </ligand>
</feature>
<feature type="binding site" evidence="1">
    <location>
        <position position="38"/>
    </location>
    <ligand>
        <name>NADPH</name>
        <dbReference type="ChEBI" id="CHEBI:57783"/>
    </ligand>
</feature>
<feature type="binding site" evidence="1">
    <location>
        <position position="122"/>
    </location>
    <ligand>
        <name>NADPH</name>
        <dbReference type="ChEBI" id="CHEBI:57783"/>
    </ligand>
</feature>
<feature type="binding site" evidence="1">
    <location>
        <position position="123"/>
    </location>
    <ligand>
        <name>1-deoxy-D-xylulose 5-phosphate</name>
        <dbReference type="ChEBI" id="CHEBI:57792"/>
    </ligand>
</feature>
<feature type="binding site" evidence="1">
    <location>
        <position position="124"/>
    </location>
    <ligand>
        <name>NADPH</name>
        <dbReference type="ChEBI" id="CHEBI:57783"/>
    </ligand>
</feature>
<feature type="binding site" evidence="1">
    <location>
        <position position="148"/>
    </location>
    <ligand>
        <name>Mn(2+)</name>
        <dbReference type="ChEBI" id="CHEBI:29035"/>
    </ligand>
</feature>
<feature type="binding site" evidence="1">
    <location>
        <position position="149"/>
    </location>
    <ligand>
        <name>1-deoxy-D-xylulose 5-phosphate</name>
        <dbReference type="ChEBI" id="CHEBI:57792"/>
    </ligand>
</feature>
<feature type="binding site" evidence="1">
    <location>
        <position position="150"/>
    </location>
    <ligand>
        <name>1-deoxy-D-xylulose 5-phosphate</name>
        <dbReference type="ChEBI" id="CHEBI:57792"/>
    </ligand>
</feature>
<feature type="binding site" evidence="1">
    <location>
        <position position="150"/>
    </location>
    <ligand>
        <name>Mn(2+)</name>
        <dbReference type="ChEBI" id="CHEBI:29035"/>
    </ligand>
</feature>
<feature type="binding site" evidence="1">
    <location>
        <position position="174"/>
    </location>
    <ligand>
        <name>1-deoxy-D-xylulose 5-phosphate</name>
        <dbReference type="ChEBI" id="CHEBI:57792"/>
    </ligand>
</feature>
<feature type="binding site" evidence="1">
    <location>
        <position position="197"/>
    </location>
    <ligand>
        <name>1-deoxy-D-xylulose 5-phosphate</name>
        <dbReference type="ChEBI" id="CHEBI:57792"/>
    </ligand>
</feature>
<feature type="binding site" evidence="1">
    <location>
        <position position="203"/>
    </location>
    <ligand>
        <name>NADPH</name>
        <dbReference type="ChEBI" id="CHEBI:57783"/>
    </ligand>
</feature>
<feature type="binding site" evidence="1">
    <location>
        <position position="210"/>
    </location>
    <ligand>
        <name>1-deoxy-D-xylulose 5-phosphate</name>
        <dbReference type="ChEBI" id="CHEBI:57792"/>
    </ligand>
</feature>
<feature type="binding site" evidence="1">
    <location>
        <position position="215"/>
    </location>
    <ligand>
        <name>1-deoxy-D-xylulose 5-phosphate</name>
        <dbReference type="ChEBI" id="CHEBI:57792"/>
    </ligand>
</feature>
<feature type="binding site" evidence="1">
    <location>
        <position position="216"/>
    </location>
    <ligand>
        <name>1-deoxy-D-xylulose 5-phosphate</name>
        <dbReference type="ChEBI" id="CHEBI:57792"/>
    </ligand>
</feature>
<feature type="binding site" evidence="1">
    <location>
        <position position="219"/>
    </location>
    <ligand>
        <name>1-deoxy-D-xylulose 5-phosphate</name>
        <dbReference type="ChEBI" id="CHEBI:57792"/>
    </ligand>
</feature>
<feature type="binding site" evidence="1">
    <location>
        <position position="219"/>
    </location>
    <ligand>
        <name>Mn(2+)</name>
        <dbReference type="ChEBI" id="CHEBI:29035"/>
    </ligand>
</feature>
<name>DXR_EHRRW</name>
<organism>
    <name type="scientific">Ehrlichia ruminantium (strain Welgevonden)</name>
    <dbReference type="NCBI Taxonomy" id="254945"/>
    <lineage>
        <taxon>Bacteria</taxon>
        <taxon>Pseudomonadati</taxon>
        <taxon>Pseudomonadota</taxon>
        <taxon>Alphaproteobacteria</taxon>
        <taxon>Rickettsiales</taxon>
        <taxon>Anaplasmataceae</taxon>
        <taxon>Ehrlichia</taxon>
    </lineage>
</organism>
<comment type="function">
    <text evidence="1">Catalyzes the NADPH-dependent rearrangement and reduction of 1-deoxy-D-xylulose-5-phosphate (DXP) to 2-C-methyl-D-erythritol 4-phosphate (MEP).</text>
</comment>
<comment type="catalytic activity">
    <reaction evidence="1">
        <text>2-C-methyl-D-erythritol 4-phosphate + NADP(+) = 1-deoxy-D-xylulose 5-phosphate + NADPH + H(+)</text>
        <dbReference type="Rhea" id="RHEA:13717"/>
        <dbReference type="ChEBI" id="CHEBI:15378"/>
        <dbReference type="ChEBI" id="CHEBI:57783"/>
        <dbReference type="ChEBI" id="CHEBI:57792"/>
        <dbReference type="ChEBI" id="CHEBI:58262"/>
        <dbReference type="ChEBI" id="CHEBI:58349"/>
        <dbReference type="EC" id="1.1.1.267"/>
    </reaction>
    <physiologicalReaction direction="right-to-left" evidence="1">
        <dbReference type="Rhea" id="RHEA:13719"/>
    </physiologicalReaction>
</comment>
<comment type="cofactor">
    <cofactor evidence="1">
        <name>Mg(2+)</name>
        <dbReference type="ChEBI" id="CHEBI:18420"/>
    </cofactor>
    <cofactor evidence="1">
        <name>Mn(2+)</name>
        <dbReference type="ChEBI" id="CHEBI:29035"/>
    </cofactor>
</comment>
<comment type="pathway">
    <text evidence="1">Isoprenoid biosynthesis; isopentenyl diphosphate biosynthesis via DXP pathway; isopentenyl diphosphate from 1-deoxy-D-xylulose 5-phosphate: step 1/6.</text>
</comment>
<comment type="similarity">
    <text evidence="1">Belongs to the DXR family.</text>
</comment>
<proteinExistence type="inferred from homology"/>
<protein>
    <recommendedName>
        <fullName evidence="1">1-deoxy-D-xylulose 5-phosphate reductoisomerase</fullName>
        <shortName evidence="1">DXP reductoisomerase</shortName>
        <ecNumber evidence="1">1.1.1.267</ecNumber>
    </recommendedName>
    <alternativeName>
        <fullName evidence="1">1-deoxyxylulose-5-phosphate reductoisomerase</fullName>
    </alternativeName>
    <alternativeName>
        <fullName evidence="1">2-C-methyl-D-erythritol 4-phosphate synthase</fullName>
    </alternativeName>
</protein>
<dbReference type="EC" id="1.1.1.267" evidence="1"/>
<dbReference type="EMBL" id="CR767821">
    <property type="protein sequence ID" value="CAH58203.1"/>
    <property type="molecule type" value="Genomic_DNA"/>
</dbReference>
<dbReference type="EMBL" id="CR925678">
    <property type="protein sequence ID" value="CAI26991.1"/>
    <property type="molecule type" value="Genomic_DNA"/>
</dbReference>
<dbReference type="RefSeq" id="WP_011155156.1">
    <property type="nucleotide sequence ID" value="NC_005295.2"/>
</dbReference>
<dbReference type="SMR" id="Q5HB55"/>
<dbReference type="GeneID" id="33058117"/>
<dbReference type="KEGG" id="eru:Erum4750"/>
<dbReference type="KEGG" id="erw:ERWE_CDS_04970"/>
<dbReference type="eggNOG" id="COG0743">
    <property type="taxonomic scope" value="Bacteria"/>
</dbReference>
<dbReference type="HOGENOM" id="CLU_035714_4_0_5"/>
<dbReference type="UniPathway" id="UPA00056">
    <property type="reaction ID" value="UER00092"/>
</dbReference>
<dbReference type="Proteomes" id="UP000001021">
    <property type="component" value="Chromosome"/>
</dbReference>
<dbReference type="GO" id="GO:0030604">
    <property type="term" value="F:1-deoxy-D-xylulose-5-phosphate reductoisomerase activity"/>
    <property type="evidence" value="ECO:0007669"/>
    <property type="project" value="UniProtKB-UniRule"/>
</dbReference>
<dbReference type="GO" id="GO:0030145">
    <property type="term" value="F:manganese ion binding"/>
    <property type="evidence" value="ECO:0007669"/>
    <property type="project" value="TreeGrafter"/>
</dbReference>
<dbReference type="GO" id="GO:0070402">
    <property type="term" value="F:NADPH binding"/>
    <property type="evidence" value="ECO:0007669"/>
    <property type="project" value="InterPro"/>
</dbReference>
<dbReference type="GO" id="GO:0051484">
    <property type="term" value="P:isopentenyl diphosphate biosynthetic process, methylerythritol 4-phosphate pathway involved in terpenoid biosynthetic process"/>
    <property type="evidence" value="ECO:0007669"/>
    <property type="project" value="TreeGrafter"/>
</dbReference>
<dbReference type="Gene3D" id="1.10.1740.10">
    <property type="match status" value="1"/>
</dbReference>
<dbReference type="Gene3D" id="3.40.50.720">
    <property type="entry name" value="NAD(P)-binding Rossmann-like Domain"/>
    <property type="match status" value="1"/>
</dbReference>
<dbReference type="HAMAP" id="MF_00183">
    <property type="entry name" value="DXP_reductoisom"/>
    <property type="match status" value="1"/>
</dbReference>
<dbReference type="InterPro" id="IPR003821">
    <property type="entry name" value="DXP_reductoisomerase"/>
</dbReference>
<dbReference type="InterPro" id="IPR013644">
    <property type="entry name" value="DXP_reductoisomerase_C"/>
</dbReference>
<dbReference type="InterPro" id="IPR013512">
    <property type="entry name" value="DXP_reductoisomerase_N"/>
</dbReference>
<dbReference type="InterPro" id="IPR026877">
    <property type="entry name" value="DXPR_C"/>
</dbReference>
<dbReference type="InterPro" id="IPR036169">
    <property type="entry name" value="DXPR_C_sf"/>
</dbReference>
<dbReference type="InterPro" id="IPR036291">
    <property type="entry name" value="NAD(P)-bd_dom_sf"/>
</dbReference>
<dbReference type="NCBIfam" id="TIGR00243">
    <property type="entry name" value="Dxr"/>
    <property type="match status" value="1"/>
</dbReference>
<dbReference type="PANTHER" id="PTHR30525">
    <property type="entry name" value="1-DEOXY-D-XYLULOSE 5-PHOSPHATE REDUCTOISOMERASE"/>
    <property type="match status" value="1"/>
</dbReference>
<dbReference type="PANTHER" id="PTHR30525:SF0">
    <property type="entry name" value="1-DEOXY-D-XYLULOSE 5-PHOSPHATE REDUCTOISOMERASE, CHLOROPLASTIC"/>
    <property type="match status" value="1"/>
</dbReference>
<dbReference type="Pfam" id="PF08436">
    <property type="entry name" value="DXP_redisom_C"/>
    <property type="match status" value="1"/>
</dbReference>
<dbReference type="Pfam" id="PF02670">
    <property type="entry name" value="DXP_reductoisom"/>
    <property type="match status" value="1"/>
</dbReference>
<dbReference type="Pfam" id="PF13288">
    <property type="entry name" value="DXPR_C"/>
    <property type="match status" value="1"/>
</dbReference>
<dbReference type="PIRSF" id="PIRSF006205">
    <property type="entry name" value="Dxp_reductismrs"/>
    <property type="match status" value="1"/>
</dbReference>
<dbReference type="SUPFAM" id="SSF69055">
    <property type="entry name" value="1-deoxy-D-xylulose-5-phosphate reductoisomerase, C-terminal domain"/>
    <property type="match status" value="1"/>
</dbReference>
<dbReference type="SUPFAM" id="SSF55347">
    <property type="entry name" value="Glyceraldehyde-3-phosphate dehydrogenase-like, C-terminal domain"/>
    <property type="match status" value="1"/>
</dbReference>
<dbReference type="SUPFAM" id="SSF51735">
    <property type="entry name" value="NAD(P)-binding Rossmann-fold domains"/>
    <property type="match status" value="1"/>
</dbReference>
<gene>
    <name evidence="1" type="primary">dxr</name>
    <name type="ordered locus">Erum4750</name>
    <name type="ordered locus">ERWE_CDS_04970</name>
</gene>
<sequence>MKTVSIFGSTGAIGQMIIDVILASSDSYQVKALVAKSNVQLLAFQAKIVNAEMVVIADVGLYKELKDLLFGTNVKISVGDVGMQMAASLNVDYVMMAIVGIAALVPMVYLISAGVKVIALANKESVVCGGTLLFNLAREKNVNVIPVDSEHNAIFQILHSNDRENIDKITITGSGGALLYMDYDQMRNITVQETIKHPVWKMGKKISVDSATMVNKSLEIIEAYHLFSVKPEKLDVIIHPEAIVHGIVSYVDGACIAFMSVPDMKISIMYTLSWPNRMSMLYKKLNLASYHQLTFMKPDINKFPGIRLGFEILRTSNIHANSIIFNTANEIAVDAFLNRKIGFLDIVNVIYSTLDMVDCLHINSLSDILECDSIARRVASDIICKLN</sequence>
<reference key="1">
    <citation type="journal article" date="2005" name="Proc. Natl. Acad. Sci. U.S.A.">
        <title>The genome of the heartwater agent Ehrlichia ruminantium contains multiple tandem repeats of actively variable copy number.</title>
        <authorList>
            <person name="Collins N.E."/>
            <person name="Liebenberg J."/>
            <person name="de Villiers E.P."/>
            <person name="Brayton K.A."/>
            <person name="Louw E."/>
            <person name="Pretorius A."/>
            <person name="Faber F.E."/>
            <person name="van Heerden H."/>
            <person name="Josemans A."/>
            <person name="van Kleef M."/>
            <person name="Steyn H.C."/>
            <person name="van Strijp M.F."/>
            <person name="Zweygarth E."/>
            <person name="Jongejan F."/>
            <person name="Maillard J.C."/>
            <person name="Berthier D."/>
            <person name="Botha M."/>
            <person name="Joubert F."/>
            <person name="Corton C.H."/>
            <person name="Thomson N.R."/>
            <person name="Allsopp M.T."/>
            <person name="Allsopp B.A."/>
        </authorList>
    </citation>
    <scope>NUCLEOTIDE SEQUENCE [LARGE SCALE GENOMIC DNA]</scope>
    <source>
        <strain>Welgevonden</strain>
    </source>
</reference>
<reference key="2">
    <citation type="journal article" date="2006" name="J. Bacteriol.">
        <title>Comparative genomic analysis of three strains of Ehrlichia ruminantium reveals an active process of genome size plasticity.</title>
        <authorList>
            <person name="Frutos R."/>
            <person name="Viari A."/>
            <person name="Ferraz C."/>
            <person name="Morgat A."/>
            <person name="Eychenie S."/>
            <person name="Kandassamy Y."/>
            <person name="Chantal I."/>
            <person name="Bensaid A."/>
            <person name="Coissac E."/>
            <person name="Vachiery N."/>
            <person name="Demaille J."/>
            <person name="Martinez D."/>
        </authorList>
    </citation>
    <scope>NUCLEOTIDE SEQUENCE [LARGE SCALE GENOMIC DNA]</scope>
    <source>
        <strain>Welgevonden</strain>
    </source>
</reference>
<accession>Q5HB55</accession>
<accession>Q5FCA1</accession>